<evidence type="ECO:0000250" key="1"/>
<evidence type="ECO:0000305" key="2"/>
<protein>
    <recommendedName>
        <fullName>Putative S-adenosyl-L-methionine-dependent methyltransferase MAP_3881</fullName>
        <ecNumber>2.1.1.-</ecNumber>
    </recommendedName>
</protein>
<gene>
    <name type="ordered locus">MAP_3881</name>
</gene>
<reference key="1">
    <citation type="journal article" date="2005" name="Proc. Natl. Acad. Sci. U.S.A.">
        <title>The complete genome sequence of Mycobacterium avium subspecies paratuberculosis.</title>
        <authorList>
            <person name="Li L."/>
            <person name="Bannantine J.P."/>
            <person name="Zhang Q."/>
            <person name="Amonsin A."/>
            <person name="May B.J."/>
            <person name="Alt D."/>
            <person name="Banerji N."/>
            <person name="Kanjilal S."/>
            <person name="Kapur V."/>
        </authorList>
    </citation>
    <scope>NUCLEOTIDE SEQUENCE [LARGE SCALE GENOMIC DNA]</scope>
    <source>
        <strain>ATCC BAA-968 / K-10</strain>
    </source>
</reference>
<feature type="chain" id="PRO_0000361183" description="Putative S-adenosyl-L-methionine-dependent methyltransferase MAP_3881">
    <location>
        <begin position="1"/>
        <end position="296"/>
    </location>
</feature>
<feature type="binding site" evidence="1">
    <location>
        <position position="121"/>
    </location>
    <ligand>
        <name>S-adenosyl-L-methionine</name>
        <dbReference type="ChEBI" id="CHEBI:59789"/>
    </ligand>
</feature>
<feature type="binding site" evidence="1">
    <location>
        <begin position="150"/>
        <end position="151"/>
    </location>
    <ligand>
        <name>S-adenosyl-L-methionine</name>
        <dbReference type="ChEBI" id="CHEBI:59789"/>
    </ligand>
</feature>
<proteinExistence type="inferred from homology"/>
<organism>
    <name type="scientific">Mycolicibacterium paratuberculosis (strain ATCC BAA-968 / K-10)</name>
    <name type="common">Mycobacterium paratuberculosis</name>
    <dbReference type="NCBI Taxonomy" id="262316"/>
    <lineage>
        <taxon>Bacteria</taxon>
        <taxon>Bacillati</taxon>
        <taxon>Actinomycetota</taxon>
        <taxon>Actinomycetes</taxon>
        <taxon>Mycobacteriales</taxon>
        <taxon>Mycobacteriaceae</taxon>
        <taxon>Mycobacterium</taxon>
        <taxon>Mycobacterium avium complex (MAC)</taxon>
    </lineage>
</organism>
<accession>Q73T38</accession>
<name>Y3881_MYCPA</name>
<sequence length="296" mass="31880">MAATAEVGVTATLGAAARAVATRQGLLNDPYAEPLLGAVGIDYLTRAIADHTFAADESPVGDDPAVTSLLDALAAHTRFVDEFLAEAGRAGIRQVVILASGLDTRPYRLWWPRGTTVYEIDRPRVLDFKAGVLRGLDARLATNRCAVGIDLRDDWPAALRRVGFDAAQPTAWVAEQLLVGYLKPAEQNRLLRRLTAASAAGSRLAADHLPTWDPLQLEAERAFVEGWRRRGLDIDLASLTHLGEYHYVPEYLATHGWEPAARSIADLLGGLGLGPRRGAGSGGAQFIPEYVTATRV</sequence>
<keyword id="KW-0489">Methyltransferase</keyword>
<keyword id="KW-1185">Reference proteome</keyword>
<keyword id="KW-0949">S-adenosyl-L-methionine</keyword>
<keyword id="KW-0808">Transferase</keyword>
<comment type="function">
    <text evidence="1">Exhibits S-adenosyl-L-methionine-dependent methyltransferase activity.</text>
</comment>
<comment type="similarity">
    <text evidence="2">Belongs to the UPF0677 family.</text>
</comment>
<dbReference type="EC" id="2.1.1.-"/>
<dbReference type="EMBL" id="AE016958">
    <property type="protein sequence ID" value="AAS06431.1"/>
    <property type="molecule type" value="Genomic_DNA"/>
</dbReference>
<dbReference type="RefSeq" id="WP_010950151.1">
    <property type="nucleotide sequence ID" value="NZ_CP106873.1"/>
</dbReference>
<dbReference type="SMR" id="Q73T38"/>
<dbReference type="STRING" id="262316.MAP_3881"/>
<dbReference type="KEGG" id="mpa:MAP_3881"/>
<dbReference type="PATRIC" id="fig|262316.17.peg.4132"/>
<dbReference type="eggNOG" id="COG3315">
    <property type="taxonomic scope" value="Bacteria"/>
</dbReference>
<dbReference type="HOGENOM" id="CLU_056160_2_1_11"/>
<dbReference type="Proteomes" id="UP000000580">
    <property type="component" value="Chromosome"/>
</dbReference>
<dbReference type="GO" id="GO:0008168">
    <property type="term" value="F:methyltransferase activity"/>
    <property type="evidence" value="ECO:0007669"/>
    <property type="project" value="UniProtKB-KW"/>
</dbReference>
<dbReference type="GO" id="GO:0032259">
    <property type="term" value="P:methylation"/>
    <property type="evidence" value="ECO:0007669"/>
    <property type="project" value="UniProtKB-KW"/>
</dbReference>
<dbReference type="Gene3D" id="3.40.50.150">
    <property type="entry name" value="Vaccinia Virus protein VP39"/>
    <property type="match status" value="1"/>
</dbReference>
<dbReference type="InterPro" id="IPR007213">
    <property type="entry name" value="Ppm1/Ppm2/Tcmp"/>
</dbReference>
<dbReference type="InterPro" id="IPR029063">
    <property type="entry name" value="SAM-dependent_MTases_sf"/>
</dbReference>
<dbReference type="InterPro" id="IPR011610">
    <property type="entry name" value="SAM_mthyl_Trfase_ML2640-like"/>
</dbReference>
<dbReference type="NCBIfam" id="TIGR00027">
    <property type="entry name" value="mthyl_TIGR00027"/>
    <property type="match status" value="1"/>
</dbReference>
<dbReference type="PANTHER" id="PTHR43619">
    <property type="entry name" value="S-ADENOSYL-L-METHIONINE-DEPENDENT METHYLTRANSFERASE YKTD-RELATED"/>
    <property type="match status" value="1"/>
</dbReference>
<dbReference type="PANTHER" id="PTHR43619:SF2">
    <property type="entry name" value="S-ADENOSYL-L-METHIONINE-DEPENDENT METHYLTRANSFERASES SUPERFAMILY PROTEIN"/>
    <property type="match status" value="1"/>
</dbReference>
<dbReference type="Pfam" id="PF04072">
    <property type="entry name" value="LCM"/>
    <property type="match status" value="1"/>
</dbReference>
<dbReference type="SUPFAM" id="SSF53335">
    <property type="entry name" value="S-adenosyl-L-methionine-dependent methyltransferases"/>
    <property type="match status" value="1"/>
</dbReference>